<keyword id="KW-0963">Cytoplasm</keyword>
<keyword id="KW-0648">Protein biosynthesis</keyword>
<keyword id="KW-0663">Pyridoxal phosphate</keyword>
<keyword id="KW-1185">Reference proteome</keyword>
<keyword id="KW-0711">Selenium</keyword>
<keyword id="KW-0808">Transferase</keyword>
<name>SELA_CAMLR</name>
<reference key="1">
    <citation type="journal article" date="2008" name="Foodborne Pathog. Dis.">
        <title>The complete genome sequence and analysis of the human pathogen Campylobacter lari.</title>
        <authorList>
            <person name="Miller W.G."/>
            <person name="Wang G."/>
            <person name="Binnewies T.T."/>
            <person name="Parker C.T."/>
        </authorList>
    </citation>
    <scope>NUCLEOTIDE SEQUENCE [LARGE SCALE GENOMIC DNA]</scope>
    <source>
        <strain>RM2100 / D67 / ATCC BAA-1060</strain>
    </source>
</reference>
<comment type="function">
    <text evidence="1">Converts seryl-tRNA(Sec) to selenocysteinyl-tRNA(Sec) required for selenoprotein biosynthesis.</text>
</comment>
<comment type="catalytic activity">
    <reaction evidence="1">
        <text>L-seryl-tRNA(Sec) + selenophosphate + H(+) = L-selenocysteinyl-tRNA(Sec) + phosphate</text>
        <dbReference type="Rhea" id="RHEA:22728"/>
        <dbReference type="Rhea" id="RHEA-COMP:9742"/>
        <dbReference type="Rhea" id="RHEA-COMP:9743"/>
        <dbReference type="ChEBI" id="CHEBI:15378"/>
        <dbReference type="ChEBI" id="CHEBI:16144"/>
        <dbReference type="ChEBI" id="CHEBI:43474"/>
        <dbReference type="ChEBI" id="CHEBI:78533"/>
        <dbReference type="ChEBI" id="CHEBI:78573"/>
        <dbReference type="EC" id="2.9.1.1"/>
    </reaction>
</comment>
<comment type="cofactor">
    <cofactor evidence="1">
        <name>pyridoxal 5'-phosphate</name>
        <dbReference type="ChEBI" id="CHEBI:597326"/>
    </cofactor>
</comment>
<comment type="pathway">
    <text evidence="1">Aminoacyl-tRNA biosynthesis; selenocysteinyl-tRNA(Sec) biosynthesis; selenocysteinyl-tRNA(Sec) from L-seryl-tRNA(Sec) (bacterial route): step 1/1.</text>
</comment>
<comment type="subcellular location">
    <subcellularLocation>
        <location evidence="1">Cytoplasm</location>
    </subcellularLocation>
</comment>
<comment type="similarity">
    <text evidence="1">Belongs to the SelA family.</text>
</comment>
<sequence>MNKFRNFPPINTLINDENLANYPLYLRAHFAKIIVSNCKKELSKDENLNFSLQDLLKKITQSIDEFLNAQSQSLINATGVIIHTNLGRSIIDESIFERTKEIICSYSNLEFNMQSGKRGSRYDALSANLKILFDCEDCLVVNNNASAVFLILNTLAKNEEVITSRSELVEIGGNFRIPEVMLAAGVRLKEIGTTNKTHLYDYEKAINENTKMILKTHRSNFAFKGFFEEVSLSEIHTLTKKKKIISYYDLGSGWCEKINKQLSKNEPSVKELLKHCDILSFSGDKLFGSTQAGIILGKKKYIQQLKKNQLLRMLRVDKITLAFLNETTKAYLEKEYEKIPTLKLLNDNLKTIEKKALFIKEKIPIKCELKASKSLVGGGSMPDKSLDTFVLSFDEKALLLQEKFRKKGVIGRVENGHFVLDFRSILEKDLNRLIHAIKEVFHA</sequence>
<evidence type="ECO:0000255" key="1">
    <source>
        <dbReference type="HAMAP-Rule" id="MF_00423"/>
    </source>
</evidence>
<gene>
    <name evidence="1" type="primary">selA</name>
    <name type="ordered locus">Cla_1286</name>
</gene>
<organism>
    <name type="scientific">Campylobacter lari (strain RM2100 / D67 / ATCC BAA-1060)</name>
    <dbReference type="NCBI Taxonomy" id="306263"/>
    <lineage>
        <taxon>Bacteria</taxon>
        <taxon>Pseudomonadati</taxon>
        <taxon>Campylobacterota</taxon>
        <taxon>Epsilonproteobacteria</taxon>
        <taxon>Campylobacterales</taxon>
        <taxon>Campylobacteraceae</taxon>
        <taxon>Campylobacter</taxon>
    </lineage>
</organism>
<proteinExistence type="inferred from homology"/>
<feature type="chain" id="PRO_1000134918" description="L-seryl-tRNA(Sec) selenium transferase">
    <location>
        <begin position="1"/>
        <end position="443"/>
    </location>
</feature>
<feature type="modified residue" description="N6-(pyridoxal phosphate)lysine" evidence="1">
    <location>
        <position position="285"/>
    </location>
</feature>
<protein>
    <recommendedName>
        <fullName evidence="1">L-seryl-tRNA(Sec) selenium transferase</fullName>
        <ecNumber evidence="1">2.9.1.1</ecNumber>
    </recommendedName>
    <alternativeName>
        <fullName evidence="1">Selenocysteine synthase</fullName>
        <shortName evidence="1">Sec synthase</shortName>
    </alternativeName>
    <alternativeName>
        <fullName evidence="1">Selenocysteinyl-tRNA(Sec) synthase</fullName>
    </alternativeName>
</protein>
<accession>B9KDG5</accession>
<dbReference type="EC" id="2.9.1.1" evidence="1"/>
<dbReference type="EMBL" id="CP000932">
    <property type="protein sequence ID" value="ACM64603.1"/>
    <property type="molecule type" value="Genomic_DNA"/>
</dbReference>
<dbReference type="RefSeq" id="WP_012661986.1">
    <property type="nucleotide sequence ID" value="NC_012039.1"/>
</dbReference>
<dbReference type="SMR" id="B9KDG5"/>
<dbReference type="STRING" id="306263.Cla_1286"/>
<dbReference type="KEGG" id="cla:CLA_1286"/>
<dbReference type="PATRIC" id="fig|306263.5.peg.1270"/>
<dbReference type="eggNOG" id="COG1921">
    <property type="taxonomic scope" value="Bacteria"/>
</dbReference>
<dbReference type="HOGENOM" id="CLU_038142_1_0_7"/>
<dbReference type="UniPathway" id="UPA00906">
    <property type="reaction ID" value="UER00896"/>
</dbReference>
<dbReference type="Proteomes" id="UP000007727">
    <property type="component" value="Chromosome"/>
</dbReference>
<dbReference type="GO" id="GO:0005737">
    <property type="term" value="C:cytoplasm"/>
    <property type="evidence" value="ECO:0007669"/>
    <property type="project" value="UniProtKB-SubCell"/>
</dbReference>
<dbReference type="GO" id="GO:0004125">
    <property type="term" value="F:L-seryl-tRNA(Sec) selenium transferase activity"/>
    <property type="evidence" value="ECO:0007669"/>
    <property type="project" value="UniProtKB-UniRule"/>
</dbReference>
<dbReference type="GO" id="GO:0001717">
    <property type="term" value="P:conversion of seryl-tRNAsec to selenocys-tRNAsec"/>
    <property type="evidence" value="ECO:0007669"/>
    <property type="project" value="UniProtKB-UniRule"/>
</dbReference>
<dbReference type="GO" id="GO:0001514">
    <property type="term" value="P:selenocysteine incorporation"/>
    <property type="evidence" value="ECO:0007669"/>
    <property type="project" value="UniProtKB-UniRule"/>
</dbReference>
<dbReference type="Gene3D" id="3.90.1150.180">
    <property type="match status" value="1"/>
</dbReference>
<dbReference type="Gene3D" id="3.40.640.10">
    <property type="entry name" value="Type I PLP-dependent aspartate aminotransferase-like (Major domain)"/>
    <property type="match status" value="1"/>
</dbReference>
<dbReference type="HAMAP" id="MF_00423">
    <property type="entry name" value="SelA"/>
    <property type="match status" value="1"/>
</dbReference>
<dbReference type="InterPro" id="IPR015424">
    <property type="entry name" value="PyrdxlP-dep_Trfase"/>
</dbReference>
<dbReference type="InterPro" id="IPR015421">
    <property type="entry name" value="PyrdxlP-dep_Trfase_major"/>
</dbReference>
<dbReference type="InterPro" id="IPR018319">
    <property type="entry name" value="SelA-like"/>
</dbReference>
<dbReference type="InterPro" id="IPR004534">
    <property type="entry name" value="SelA_trans"/>
</dbReference>
<dbReference type="NCBIfam" id="TIGR00474">
    <property type="entry name" value="selA"/>
    <property type="match status" value="1"/>
</dbReference>
<dbReference type="PANTHER" id="PTHR32328">
    <property type="entry name" value="L-SERYL-TRNA(SEC) SELENIUM TRANSFERASE"/>
    <property type="match status" value="1"/>
</dbReference>
<dbReference type="PANTHER" id="PTHR32328:SF0">
    <property type="entry name" value="L-SERYL-TRNA(SEC) SELENIUM TRANSFERASE"/>
    <property type="match status" value="1"/>
</dbReference>
<dbReference type="Pfam" id="PF03841">
    <property type="entry name" value="SelA"/>
    <property type="match status" value="1"/>
</dbReference>
<dbReference type="SUPFAM" id="SSF53383">
    <property type="entry name" value="PLP-dependent transferases"/>
    <property type="match status" value="1"/>
</dbReference>